<organism>
    <name type="scientific">Caldanaerobacter subterraneus subsp. tengcongensis (strain DSM 15242 / JCM 11007 / NBRC 100824 / MB4)</name>
    <name type="common">Thermoanaerobacter tengcongensis</name>
    <dbReference type="NCBI Taxonomy" id="273068"/>
    <lineage>
        <taxon>Bacteria</taxon>
        <taxon>Bacillati</taxon>
        <taxon>Bacillota</taxon>
        <taxon>Clostridia</taxon>
        <taxon>Thermoanaerobacterales</taxon>
        <taxon>Thermoanaerobacteraceae</taxon>
        <taxon>Caldanaerobacter</taxon>
    </lineage>
</organism>
<dbReference type="EC" id="7.2.2.6" evidence="1"/>
<dbReference type="EMBL" id="AE008691">
    <property type="protein sequence ID" value="AAM25189.1"/>
    <property type="molecule type" value="Genomic_DNA"/>
</dbReference>
<dbReference type="RefSeq" id="WP_009610761.1">
    <property type="nucleotide sequence ID" value="NC_003869.1"/>
</dbReference>
<dbReference type="SMR" id="Q8R8I6"/>
<dbReference type="STRING" id="273068.TTE2011"/>
<dbReference type="KEGG" id="tte:TTE2011"/>
<dbReference type="eggNOG" id="COG2216">
    <property type="taxonomic scope" value="Bacteria"/>
</dbReference>
<dbReference type="HOGENOM" id="CLU_025728_2_0_9"/>
<dbReference type="OrthoDB" id="9760364at2"/>
<dbReference type="Proteomes" id="UP000000555">
    <property type="component" value="Chromosome"/>
</dbReference>
<dbReference type="GO" id="GO:0005886">
    <property type="term" value="C:plasma membrane"/>
    <property type="evidence" value="ECO:0007669"/>
    <property type="project" value="UniProtKB-SubCell"/>
</dbReference>
<dbReference type="GO" id="GO:0005524">
    <property type="term" value="F:ATP binding"/>
    <property type="evidence" value="ECO:0007669"/>
    <property type="project" value="UniProtKB-UniRule"/>
</dbReference>
<dbReference type="GO" id="GO:0016887">
    <property type="term" value="F:ATP hydrolysis activity"/>
    <property type="evidence" value="ECO:0007669"/>
    <property type="project" value="InterPro"/>
</dbReference>
<dbReference type="GO" id="GO:0000287">
    <property type="term" value="F:magnesium ion binding"/>
    <property type="evidence" value="ECO:0007669"/>
    <property type="project" value="UniProtKB-UniRule"/>
</dbReference>
<dbReference type="GO" id="GO:0008556">
    <property type="term" value="F:P-type potassium transmembrane transporter activity"/>
    <property type="evidence" value="ECO:0007669"/>
    <property type="project" value="UniProtKB-UniRule"/>
</dbReference>
<dbReference type="CDD" id="cd02078">
    <property type="entry name" value="P-type_ATPase_K"/>
    <property type="match status" value="1"/>
</dbReference>
<dbReference type="FunFam" id="2.70.150.10:FF:000033">
    <property type="entry name" value="Potassium-transporting ATPase ATP-binding subunit"/>
    <property type="match status" value="1"/>
</dbReference>
<dbReference type="FunFam" id="3.40.1110.10:FF:000007">
    <property type="entry name" value="Potassium-transporting ATPase ATP-binding subunit"/>
    <property type="match status" value="1"/>
</dbReference>
<dbReference type="Gene3D" id="3.40.1110.10">
    <property type="entry name" value="Calcium-transporting ATPase, cytoplasmic domain N"/>
    <property type="match status" value="1"/>
</dbReference>
<dbReference type="Gene3D" id="2.70.150.10">
    <property type="entry name" value="Calcium-transporting ATPase, cytoplasmic transduction domain A"/>
    <property type="match status" value="1"/>
</dbReference>
<dbReference type="Gene3D" id="3.40.50.1000">
    <property type="entry name" value="HAD superfamily/HAD-like"/>
    <property type="match status" value="1"/>
</dbReference>
<dbReference type="HAMAP" id="MF_00285">
    <property type="entry name" value="KdpB"/>
    <property type="match status" value="1"/>
</dbReference>
<dbReference type="InterPro" id="IPR023299">
    <property type="entry name" value="ATPase_P-typ_cyto_dom_N"/>
</dbReference>
<dbReference type="InterPro" id="IPR018303">
    <property type="entry name" value="ATPase_P-typ_P_site"/>
</dbReference>
<dbReference type="InterPro" id="IPR023298">
    <property type="entry name" value="ATPase_P-typ_TM_dom_sf"/>
</dbReference>
<dbReference type="InterPro" id="IPR008250">
    <property type="entry name" value="ATPase_P-typ_transduc_dom_A_sf"/>
</dbReference>
<dbReference type="InterPro" id="IPR036412">
    <property type="entry name" value="HAD-like_sf"/>
</dbReference>
<dbReference type="InterPro" id="IPR023214">
    <property type="entry name" value="HAD_sf"/>
</dbReference>
<dbReference type="InterPro" id="IPR006391">
    <property type="entry name" value="P-type_ATPase_bsu_IA"/>
</dbReference>
<dbReference type="InterPro" id="IPR001757">
    <property type="entry name" value="P_typ_ATPase"/>
</dbReference>
<dbReference type="InterPro" id="IPR044492">
    <property type="entry name" value="P_typ_ATPase_HD_dom"/>
</dbReference>
<dbReference type="NCBIfam" id="TIGR01494">
    <property type="entry name" value="ATPase_P-type"/>
    <property type="match status" value="2"/>
</dbReference>
<dbReference type="NCBIfam" id="TIGR01497">
    <property type="entry name" value="kdpB"/>
    <property type="match status" value="1"/>
</dbReference>
<dbReference type="PANTHER" id="PTHR43743">
    <property type="entry name" value="POTASSIUM-TRANSPORTING ATPASE ATP-BINDING SUBUNIT"/>
    <property type="match status" value="1"/>
</dbReference>
<dbReference type="PANTHER" id="PTHR43743:SF1">
    <property type="entry name" value="POTASSIUM-TRANSPORTING ATPASE ATP-BINDING SUBUNIT"/>
    <property type="match status" value="1"/>
</dbReference>
<dbReference type="Pfam" id="PF00122">
    <property type="entry name" value="E1-E2_ATPase"/>
    <property type="match status" value="1"/>
</dbReference>
<dbReference type="Pfam" id="PF00702">
    <property type="entry name" value="Hydrolase"/>
    <property type="match status" value="1"/>
</dbReference>
<dbReference type="PRINTS" id="PR00119">
    <property type="entry name" value="CATATPASE"/>
</dbReference>
<dbReference type="PRINTS" id="PR00120">
    <property type="entry name" value="HATPASE"/>
</dbReference>
<dbReference type="SFLD" id="SFLDS00003">
    <property type="entry name" value="Haloacid_Dehalogenase"/>
    <property type="match status" value="1"/>
</dbReference>
<dbReference type="SFLD" id="SFLDF00027">
    <property type="entry name" value="p-type_atpase"/>
    <property type="match status" value="1"/>
</dbReference>
<dbReference type="SUPFAM" id="SSF81653">
    <property type="entry name" value="Calcium ATPase, transduction domain A"/>
    <property type="match status" value="1"/>
</dbReference>
<dbReference type="SUPFAM" id="SSF81665">
    <property type="entry name" value="Calcium ATPase, transmembrane domain M"/>
    <property type="match status" value="1"/>
</dbReference>
<dbReference type="SUPFAM" id="SSF56784">
    <property type="entry name" value="HAD-like"/>
    <property type="match status" value="1"/>
</dbReference>
<dbReference type="PROSITE" id="PS00154">
    <property type="entry name" value="ATPASE_E1_E2"/>
    <property type="match status" value="1"/>
</dbReference>
<proteinExistence type="inferred from homology"/>
<name>KDPB_CALS4</name>
<protein>
    <recommendedName>
        <fullName evidence="1">Potassium-transporting ATPase ATP-binding subunit</fullName>
        <ecNumber evidence="1">7.2.2.6</ecNumber>
    </recommendedName>
    <alternativeName>
        <fullName evidence="1">ATP phosphohydrolase [potassium-transporting] B chain</fullName>
    </alternativeName>
    <alternativeName>
        <fullName evidence="1">Potassium-binding and translocating subunit B</fullName>
    </alternativeName>
    <alternativeName>
        <fullName evidence="1">Potassium-translocating ATPase B chain</fullName>
    </alternativeName>
</protein>
<evidence type="ECO:0000255" key="1">
    <source>
        <dbReference type="HAMAP-Rule" id="MF_00285"/>
    </source>
</evidence>
<reference key="1">
    <citation type="journal article" date="2002" name="Genome Res.">
        <title>A complete sequence of the T. tengcongensis genome.</title>
        <authorList>
            <person name="Bao Q."/>
            <person name="Tian Y."/>
            <person name="Li W."/>
            <person name="Xu Z."/>
            <person name="Xuan Z."/>
            <person name="Hu S."/>
            <person name="Dong W."/>
            <person name="Yang J."/>
            <person name="Chen Y."/>
            <person name="Xue Y."/>
            <person name="Xu Y."/>
            <person name="Lai X."/>
            <person name="Huang L."/>
            <person name="Dong X."/>
            <person name="Ma Y."/>
            <person name="Ling L."/>
            <person name="Tan H."/>
            <person name="Chen R."/>
            <person name="Wang J."/>
            <person name="Yu J."/>
            <person name="Yang H."/>
        </authorList>
    </citation>
    <scope>NUCLEOTIDE SEQUENCE [LARGE SCALE GENOMIC DNA]</scope>
    <source>
        <strain>DSM 15242 / JCM 11007 / NBRC 100824 / MB4</strain>
    </source>
</reference>
<feature type="chain" id="PRO_0000046147" description="Potassium-transporting ATPase ATP-binding subunit">
    <location>
        <begin position="1"/>
        <end position="681"/>
    </location>
</feature>
<feature type="transmembrane region" description="Helical" evidence="1">
    <location>
        <begin position="37"/>
        <end position="57"/>
    </location>
</feature>
<feature type="transmembrane region" description="Helical" evidence="1">
    <location>
        <begin position="64"/>
        <end position="84"/>
    </location>
</feature>
<feature type="transmembrane region" description="Helical" evidence="1">
    <location>
        <begin position="218"/>
        <end position="238"/>
    </location>
</feature>
<feature type="transmembrane region" description="Helical" evidence="1">
    <location>
        <begin position="255"/>
        <end position="275"/>
    </location>
</feature>
<feature type="transmembrane region" description="Helical" evidence="1">
    <location>
        <begin position="573"/>
        <end position="595"/>
    </location>
</feature>
<feature type="transmembrane region" description="Helical" evidence="1">
    <location>
        <begin position="615"/>
        <end position="635"/>
    </location>
</feature>
<feature type="transmembrane region" description="Helical" evidence="1">
    <location>
        <begin position="655"/>
        <end position="675"/>
    </location>
</feature>
<feature type="active site" description="4-aspartylphosphate intermediate" evidence="1">
    <location>
        <position position="306"/>
    </location>
</feature>
<feature type="binding site" evidence="1">
    <location>
        <position position="343"/>
    </location>
    <ligand>
        <name>ATP</name>
        <dbReference type="ChEBI" id="CHEBI:30616"/>
    </ligand>
</feature>
<feature type="binding site" evidence="1">
    <location>
        <position position="347"/>
    </location>
    <ligand>
        <name>ATP</name>
        <dbReference type="ChEBI" id="CHEBI:30616"/>
    </ligand>
</feature>
<feature type="binding site" evidence="1">
    <location>
        <begin position="375"/>
        <end position="382"/>
    </location>
    <ligand>
        <name>ATP</name>
        <dbReference type="ChEBI" id="CHEBI:30616"/>
    </ligand>
</feature>
<feature type="binding site" evidence="1">
    <location>
        <position position="394"/>
    </location>
    <ligand>
        <name>ATP</name>
        <dbReference type="ChEBI" id="CHEBI:30616"/>
    </ligand>
</feature>
<feature type="binding site" evidence="1">
    <location>
        <position position="517"/>
    </location>
    <ligand>
        <name>Mg(2+)</name>
        <dbReference type="ChEBI" id="CHEBI:18420"/>
    </ligand>
</feature>
<feature type="binding site" evidence="1">
    <location>
        <position position="521"/>
    </location>
    <ligand>
        <name>Mg(2+)</name>
        <dbReference type="ChEBI" id="CHEBI:18420"/>
    </ligand>
</feature>
<accession>Q8R8I6</accession>
<comment type="function">
    <text evidence="1">Part of the high-affinity ATP-driven potassium transport (or Kdp) system, which catalyzes the hydrolysis of ATP coupled with the electrogenic transport of potassium into the cytoplasm. This subunit is responsible for energy coupling to the transport system and for the release of the potassium ions to the cytoplasm.</text>
</comment>
<comment type="catalytic activity">
    <reaction evidence="1">
        <text>K(+)(out) + ATP + H2O = K(+)(in) + ADP + phosphate + H(+)</text>
        <dbReference type="Rhea" id="RHEA:16777"/>
        <dbReference type="ChEBI" id="CHEBI:15377"/>
        <dbReference type="ChEBI" id="CHEBI:15378"/>
        <dbReference type="ChEBI" id="CHEBI:29103"/>
        <dbReference type="ChEBI" id="CHEBI:30616"/>
        <dbReference type="ChEBI" id="CHEBI:43474"/>
        <dbReference type="ChEBI" id="CHEBI:456216"/>
        <dbReference type="EC" id="7.2.2.6"/>
    </reaction>
    <physiologicalReaction direction="left-to-right" evidence="1">
        <dbReference type="Rhea" id="RHEA:16778"/>
    </physiologicalReaction>
</comment>
<comment type="subunit">
    <text evidence="1">The system is composed of three essential subunits: KdpA, KdpB and KdpC.</text>
</comment>
<comment type="subcellular location">
    <subcellularLocation>
        <location evidence="1">Cell membrane</location>
        <topology evidence="1">Multi-pass membrane protein</topology>
    </subcellularLocation>
</comment>
<comment type="similarity">
    <text evidence="1">Belongs to the cation transport ATPase (P-type) (TC 3.A.3) family. Type IA subfamily.</text>
</comment>
<sequence length="681" mass="73136">MKRKREIKTWSREIVVGAIKNSFIKLNPLYMYKNPVMFVVEVGTFITLLATIFPTYFGSTPDEVGYNALVTFILFVTVLFANFAESLAEGRGKAQAETLRKTKKETMAKLVQSDGSIKIVKSSELKKGDIVICEAGDIIPADGEIIEGLAAIDESAITGESAPVIKEAGGDFSSVTGGTKVISDRIKIRVTVDEGESFLDRMIKLVEGAKRQKSPNEIALTTVLVSLTIIFIVVVMTLYPMAKFVHVRISAATMIALLVCLIPTTIGGLLSAIGIAGMDRVTRFNVIAMSGKAVEAAGDIDTILLDKTGTITFGNRLAADFIPVGGHSKEEVTYYALISSLKDLTPEGRSIVDLARKMGAKAPDDILEGAEVVEFSAETRMSGLNLKDGTIVRKGSYDKVKEYIGEKGGSIPDDLDKEVEKISLLGGTPLVVVKDNEVLGVIYLKDTIKPGMKERFKQLRAMGIKTIMITGDNPLTAKTIAEEAGVDEFIAESKPEDKINVIKREQAQGRLVAMTGDGTNDAPALAQADVGLAMNSGTMAAKEAANMVDLDSDPTKIIEVVGIGKQLLMTRGALTTFSIANDVAKYFAILPAIISETLPAIKVLDVMKLSSPTNAILSALIYNAIIIPILIPIAMRGVKYRPMSANALLMRNLLIYGLGGLIAPFVGIKLIDMIISSIFGM</sequence>
<keyword id="KW-0067">ATP-binding</keyword>
<keyword id="KW-1003">Cell membrane</keyword>
<keyword id="KW-0406">Ion transport</keyword>
<keyword id="KW-0460">Magnesium</keyword>
<keyword id="KW-0472">Membrane</keyword>
<keyword id="KW-0479">Metal-binding</keyword>
<keyword id="KW-0547">Nucleotide-binding</keyword>
<keyword id="KW-0597">Phosphoprotein</keyword>
<keyword id="KW-0630">Potassium</keyword>
<keyword id="KW-0633">Potassium transport</keyword>
<keyword id="KW-1185">Reference proteome</keyword>
<keyword id="KW-1278">Translocase</keyword>
<keyword id="KW-0812">Transmembrane</keyword>
<keyword id="KW-1133">Transmembrane helix</keyword>
<keyword id="KW-0813">Transport</keyword>
<gene>
    <name evidence="1" type="primary">kdpB</name>
    <name type="ordered locus">TTE2011</name>
</gene>